<name>PITX2_CHICK</name>
<dbReference type="EMBL" id="AF076640">
    <property type="protein sequence ID" value="AAC27322.1"/>
    <property type="molecule type" value="mRNA"/>
</dbReference>
<dbReference type="EMBL" id="AF077092">
    <property type="protein sequence ID" value="AAD46097.1"/>
    <property type="molecule type" value="mRNA"/>
</dbReference>
<dbReference type="EMBL" id="AF063935">
    <property type="protein sequence ID" value="AAC18346.1"/>
    <property type="molecule type" value="mRNA"/>
</dbReference>
<dbReference type="PIR" id="JW0097">
    <property type="entry name" value="JW0097"/>
</dbReference>
<dbReference type="RefSeq" id="NP_990341.1">
    <property type="nucleotide sequence ID" value="NM_205010.1"/>
</dbReference>
<dbReference type="BMRB" id="O93385"/>
<dbReference type="SMR" id="O93385"/>
<dbReference type="FunCoup" id="O93385">
    <property type="interactions" value="23"/>
</dbReference>
<dbReference type="STRING" id="9031.ENSGALP00000046615"/>
<dbReference type="GlyGen" id="O93385">
    <property type="glycosylation" value="2 sites"/>
</dbReference>
<dbReference type="PaxDb" id="9031-ENSGALP00000042989"/>
<dbReference type="GeneID" id="395862"/>
<dbReference type="KEGG" id="gga:395862"/>
<dbReference type="CTD" id="5308"/>
<dbReference type="VEuPathDB" id="HostDB:geneid_395862"/>
<dbReference type="eggNOG" id="KOG0486">
    <property type="taxonomic scope" value="Eukaryota"/>
</dbReference>
<dbReference type="InParanoid" id="O93385"/>
<dbReference type="PhylomeDB" id="O93385"/>
<dbReference type="PRO" id="PR:O93385"/>
<dbReference type="Proteomes" id="UP000000539">
    <property type="component" value="Unassembled WGS sequence"/>
</dbReference>
<dbReference type="GO" id="GO:0005737">
    <property type="term" value="C:cytoplasm"/>
    <property type="evidence" value="ECO:0007669"/>
    <property type="project" value="UniProtKB-SubCell"/>
</dbReference>
<dbReference type="GO" id="GO:0005634">
    <property type="term" value="C:nucleus"/>
    <property type="evidence" value="ECO:0000318"/>
    <property type="project" value="GO_Central"/>
</dbReference>
<dbReference type="GO" id="GO:0000981">
    <property type="term" value="F:DNA-binding transcription factor activity, RNA polymerase II-specific"/>
    <property type="evidence" value="ECO:0000318"/>
    <property type="project" value="GO_Central"/>
</dbReference>
<dbReference type="GO" id="GO:0000978">
    <property type="term" value="F:RNA polymerase II cis-regulatory region sequence-specific DNA binding"/>
    <property type="evidence" value="ECO:0000318"/>
    <property type="project" value="GO_Central"/>
</dbReference>
<dbReference type="GO" id="GO:0009653">
    <property type="term" value="P:anatomical structure morphogenesis"/>
    <property type="evidence" value="ECO:0000318"/>
    <property type="project" value="GO_Central"/>
</dbReference>
<dbReference type="GO" id="GO:0007368">
    <property type="term" value="P:determination of left/right symmetry"/>
    <property type="evidence" value="ECO:0000270"/>
    <property type="project" value="BHF-UCL"/>
</dbReference>
<dbReference type="GO" id="GO:0030326">
    <property type="term" value="P:embryonic limb morphogenesis"/>
    <property type="evidence" value="ECO:0000314"/>
    <property type="project" value="BHF-UCL"/>
</dbReference>
<dbReference type="GO" id="GO:0048562">
    <property type="term" value="P:embryonic organ morphogenesis"/>
    <property type="evidence" value="ECO:0000304"/>
    <property type="project" value="AgBase"/>
</dbReference>
<dbReference type="GO" id="GO:0001947">
    <property type="term" value="P:heart looping"/>
    <property type="evidence" value="ECO:0000315"/>
    <property type="project" value="AgBase"/>
</dbReference>
<dbReference type="GO" id="GO:0003007">
    <property type="term" value="P:heart morphogenesis"/>
    <property type="evidence" value="ECO:0000315"/>
    <property type="project" value="AgBase"/>
</dbReference>
<dbReference type="GO" id="GO:0061184">
    <property type="term" value="P:positive regulation of dermatome development"/>
    <property type="evidence" value="ECO:0000314"/>
    <property type="project" value="BHF-UCL"/>
</dbReference>
<dbReference type="GO" id="GO:0045663">
    <property type="term" value="P:positive regulation of myoblast differentiation"/>
    <property type="evidence" value="ECO:0000314"/>
    <property type="project" value="BHF-UCL"/>
</dbReference>
<dbReference type="GO" id="GO:2000288">
    <property type="term" value="P:positive regulation of myoblast proliferation"/>
    <property type="evidence" value="ECO:0000314"/>
    <property type="project" value="BHF-UCL"/>
</dbReference>
<dbReference type="GO" id="GO:2000287">
    <property type="term" value="P:positive regulation of myotome development"/>
    <property type="evidence" value="ECO:0000314"/>
    <property type="project" value="BHF-UCL"/>
</dbReference>
<dbReference type="GO" id="GO:0045944">
    <property type="term" value="P:positive regulation of transcription by RNA polymerase II"/>
    <property type="evidence" value="ECO:0000314"/>
    <property type="project" value="BHF-UCL"/>
</dbReference>
<dbReference type="GO" id="GO:0006357">
    <property type="term" value="P:regulation of transcription by RNA polymerase II"/>
    <property type="evidence" value="ECO:0000318"/>
    <property type="project" value="GO_Central"/>
</dbReference>
<dbReference type="GO" id="GO:0032526">
    <property type="term" value="P:response to retinoic acid"/>
    <property type="evidence" value="ECO:0000315"/>
    <property type="project" value="AgBase"/>
</dbReference>
<dbReference type="CDD" id="cd00086">
    <property type="entry name" value="homeodomain"/>
    <property type="match status" value="1"/>
</dbReference>
<dbReference type="FunFam" id="1.10.10.60:FF:000031">
    <property type="entry name" value="Homeobox protein"/>
    <property type="match status" value="1"/>
</dbReference>
<dbReference type="Gene3D" id="1.10.10.60">
    <property type="entry name" value="Homeodomain-like"/>
    <property type="match status" value="1"/>
</dbReference>
<dbReference type="InterPro" id="IPR001356">
    <property type="entry name" value="HD"/>
</dbReference>
<dbReference type="InterPro" id="IPR017970">
    <property type="entry name" value="Homeobox_CS"/>
</dbReference>
<dbReference type="InterPro" id="IPR016233">
    <property type="entry name" value="Homeobox_Pitx/unc30"/>
</dbReference>
<dbReference type="InterPro" id="IPR009057">
    <property type="entry name" value="Homeodomain-like_sf"/>
</dbReference>
<dbReference type="InterPro" id="IPR003654">
    <property type="entry name" value="OAR_dom"/>
</dbReference>
<dbReference type="PANTHER" id="PTHR45882:SF4">
    <property type="entry name" value="PITUITARY HOMEOBOX 2"/>
    <property type="match status" value="1"/>
</dbReference>
<dbReference type="PANTHER" id="PTHR45882">
    <property type="entry name" value="PITUITARY HOMEOBOX HOMOLOG PTX1"/>
    <property type="match status" value="1"/>
</dbReference>
<dbReference type="Pfam" id="PF00046">
    <property type="entry name" value="Homeodomain"/>
    <property type="match status" value="1"/>
</dbReference>
<dbReference type="Pfam" id="PF03826">
    <property type="entry name" value="OAR"/>
    <property type="match status" value="1"/>
</dbReference>
<dbReference type="PIRSF" id="PIRSF000563">
    <property type="entry name" value="Homeobox_protein_Pitx/Unc30"/>
    <property type="match status" value="1"/>
</dbReference>
<dbReference type="SMART" id="SM00389">
    <property type="entry name" value="HOX"/>
    <property type="match status" value="1"/>
</dbReference>
<dbReference type="SUPFAM" id="SSF46689">
    <property type="entry name" value="Homeodomain-like"/>
    <property type="match status" value="1"/>
</dbReference>
<dbReference type="PROSITE" id="PS00027">
    <property type="entry name" value="HOMEOBOX_1"/>
    <property type="match status" value="1"/>
</dbReference>
<dbReference type="PROSITE" id="PS50071">
    <property type="entry name" value="HOMEOBOX_2"/>
    <property type="match status" value="1"/>
</dbReference>
<dbReference type="PROSITE" id="PS50803">
    <property type="entry name" value="OAR"/>
    <property type="match status" value="1"/>
</dbReference>
<reference key="1">
    <citation type="journal article" date="1998" name="Biochem. Biophys. Res. Commun.">
        <title>Cloning and expression pattern of chicken Pitx2: a new component in the SHH signaling pathway controlling embryonic heart looping.</title>
        <authorList>
            <person name="St Amand T.R."/>
            <person name="Ra J."/>
            <person name="Zhang Y."/>
            <person name="Hu Y."/>
            <person name="Baber S.I."/>
            <person name="Qiu M."/>
            <person name="Chen Y."/>
        </authorList>
    </citation>
    <scope>NUCLEOTIDE SEQUENCE [MRNA] (ISOFORM 1)</scope>
    <source>
        <strain>White leghorn</strain>
    </source>
</reference>
<reference key="2">
    <citation type="submission" date="1998-07" db="EMBL/GenBank/DDBJ databases">
        <title>Ptx2 determines left-right asymmetries in vertebrates.</title>
        <authorList>
            <person name="Ryan A.K."/>
            <person name="Blumberg B."/>
            <person name="Rodriguez-Esteban C."/>
            <person name="Yonei-Tamura S."/>
            <person name="Tamura K."/>
            <person name="Tsukui T."/>
            <person name="de la Pena J."/>
            <person name="Sabbagh W."/>
            <person name="Greenwald J."/>
            <person name="Choe S."/>
            <person name="Norris D.P."/>
            <person name="Robertson E.J."/>
            <person name="Evans R.M."/>
            <person name="Rosenfeld M.G."/>
            <person name="Izpisua-Belmonte J.-C."/>
        </authorList>
    </citation>
    <scope>NUCLEOTIDE SEQUENCE [MRNA] (ISOFORM 2)</scope>
</reference>
<reference key="3">
    <citation type="submission" date="1998-05" db="EMBL/GenBank/DDBJ databases">
        <authorList>
            <person name="Albajar M."/>
            <person name="Piedra M.E."/>
            <person name="Icardo J.M."/>
            <person name="Ros M.A."/>
            <person name="Rodriguez-Rey J.C."/>
        </authorList>
    </citation>
    <scope>NUCLEOTIDE SEQUENCE [MRNA] OF 170-319</scope>
</reference>
<reference key="4">
    <citation type="journal article" date="1997" name="Mech. Dev.">
        <title>Expression patterns of Brx1 (Rieg gene), Sonic hedgehog, Nkx2.2, Dlx1 and Arx during zona limitans intrathalamica and embryonic ventral lateral geniculate nuclear formation.</title>
        <authorList>
            <person name="Kitamura K."/>
            <person name="Miura H."/>
            <person name="Yanazawa M."/>
            <person name="Miyashita T."/>
            <person name="Kato K."/>
        </authorList>
    </citation>
    <scope>DEVELOPMENTAL STAGE</scope>
</reference>
<feature type="chain" id="PRO_0000049226" description="Pituitary homeobox 2">
    <location>
        <begin position="1"/>
        <end position="333"/>
    </location>
</feature>
<feature type="DNA-binding region" description="Homeobox" evidence="3">
    <location>
        <begin position="101"/>
        <end position="160"/>
    </location>
</feature>
<feature type="region of interest" description="Disordered" evidence="5">
    <location>
        <begin position="1"/>
        <end position="115"/>
    </location>
</feature>
<feature type="short sequence motif" description="OAR" evidence="4">
    <location>
        <begin position="295"/>
        <end position="308"/>
    </location>
</feature>
<feature type="short sequence motif" description="Nuclear localization signal" evidence="2">
    <location>
        <begin position="301"/>
        <end position="305"/>
    </location>
</feature>
<feature type="compositionally biased region" description="Low complexity" evidence="5">
    <location>
        <begin position="22"/>
        <end position="33"/>
    </location>
</feature>
<feature type="compositionally biased region" description="Basic and acidic residues" evidence="5">
    <location>
        <begin position="58"/>
        <end position="67"/>
    </location>
</feature>
<feature type="compositionally biased region" description="Basic and acidic residues" evidence="5">
    <location>
        <begin position="76"/>
        <end position="89"/>
    </location>
</feature>
<feature type="compositionally biased region" description="Basic residues" evidence="5">
    <location>
        <begin position="97"/>
        <end position="106"/>
    </location>
</feature>
<feature type="splice variant" id="VSP_002266" description="In isoform 2." evidence="7">
    <location>
        <begin position="1"/>
        <end position="62"/>
    </location>
</feature>
<feature type="splice variant" id="VSP_002267" description="In isoform 2." evidence="7">
    <original>LEVHTISDTSSPEAA</original>
    <variation>MESNCRKLVSACVQL</variation>
    <location>
        <begin position="63"/>
        <end position="77"/>
    </location>
</feature>
<feature type="sequence conflict" description="In Ref. 3; AAC18346." evidence="8" ref="3">
    <original>S</original>
    <variation>T</variation>
    <location>
        <position position="234"/>
    </location>
</feature>
<feature type="sequence conflict" description="In Ref. 3; AAC18346." evidence="8" ref="3">
    <original>T</original>
    <variation>M</variation>
    <location>
        <position position="292"/>
    </location>
</feature>
<feature type="sequence conflict" description="In Ref. 3; AAC18346." evidence="8" ref="3">
    <original>N</original>
    <variation>K</variation>
    <location>
        <position position="317"/>
    </location>
</feature>
<feature type="sequence conflict" description="In Ref. 2; AAD46097." evidence="8" ref="2">
    <original>P</original>
    <variation>A</variation>
    <location>
        <position position="328"/>
    </location>
</feature>
<proteinExistence type="evidence at transcript level"/>
<evidence type="ECO:0000250" key="1">
    <source>
        <dbReference type="UniProtKB" id="P97474"/>
    </source>
</evidence>
<evidence type="ECO:0000255" key="2"/>
<evidence type="ECO:0000255" key="3">
    <source>
        <dbReference type="PROSITE-ProRule" id="PRU00108"/>
    </source>
</evidence>
<evidence type="ECO:0000255" key="4">
    <source>
        <dbReference type="PROSITE-ProRule" id="PRU00138"/>
    </source>
</evidence>
<evidence type="ECO:0000256" key="5">
    <source>
        <dbReference type="SAM" id="MobiDB-lite"/>
    </source>
</evidence>
<evidence type="ECO:0000269" key="6">
    <source>
    </source>
</evidence>
<evidence type="ECO:0000303" key="7">
    <source ref="2"/>
</evidence>
<evidence type="ECO:0000305" key="8"/>
<accession>O93385</accession>
<accession>O73854</accession>
<accession>Q9PWE0</accession>
<keyword id="KW-0025">Alternative splicing</keyword>
<keyword id="KW-0963">Cytoplasm</keyword>
<keyword id="KW-0217">Developmental protein</keyword>
<keyword id="KW-0238">DNA-binding</keyword>
<keyword id="KW-0371">Homeobox</keyword>
<keyword id="KW-0539">Nucleus</keyword>
<keyword id="KW-1185">Reference proteome</keyword>
<sequence length="333" mass="36558">MSCMKDPLSLERLGAGNNKLCSSSPSSSSSSSSCHHQQPALAMATALAPGQARSSLEAAKHRLEVHTISDTSSPEAAEKEKSQQGKSEDAGPEDPSKKKRQRRQRTHFTSQQLQELEATFQRNRYPDMSTREEIAVWTNLTEARVRVWFKNRRAKWRKRERNQQAELCKNGFGPQFNGLMQPYDDMYPGYSYNNWAAKGLTSASLSTKSFPFFNSMNVNPLSSQSMFSPPNSISSMSMSSSMVPSAVTGVPGSGLNSLNNLNNLSNPSLNSAVPTPACPYAPPTPPYVYRDTCNSSLASLRLKAKQHSSFGYASVQNPASNLSACQYPVDRPV</sequence>
<protein>
    <recommendedName>
        <fullName>Pituitary homeobox 2</fullName>
    </recommendedName>
    <alternativeName>
        <fullName>Homeobox protein PITX2</fullName>
        <shortName>cPITX2</shortName>
    </alternativeName>
    <alternativeName>
        <fullName>Paired-like homeodomain transcription factor 2</fullName>
    </alternativeName>
</protein>
<gene>
    <name type="primary">PITX2</name>
    <name type="synonym">PTX2</name>
</gene>
<comment type="function">
    <text evidence="1">May play a role in myoblast differentiation. May be involved in the establishment of left-right asymmetry in the developing embryo (By similarity). May play a role in vasculogenesis during avian embryogenesis.</text>
</comment>
<comment type="subcellular location">
    <subcellularLocation>
        <location evidence="8">Nucleus</location>
    </subcellularLocation>
    <subcellularLocation>
        <location evidence="1">Cytoplasm</location>
    </subcellularLocation>
</comment>
<comment type="alternative products">
    <event type="alternative splicing"/>
    <isoform>
        <id>O93385-1</id>
        <name>1</name>
        <sequence type="displayed"/>
    </isoform>
    <isoform>
        <id>O93385-2</id>
        <name>2</name>
        <sequence type="described" ref="VSP_002266 VSP_002267"/>
    </isoform>
</comment>
<comment type="developmental stage">
    <text evidence="6">At stage HH8, expressed in the mesoderm in the rostral neural plate. At stage HH18, detected in the ventral diencephalon and in Rathke's pouch. First expressed in the zona limitans intrathalamica at stage HH20 until at least 5.5-day-old embryo.</text>
</comment>
<comment type="similarity">
    <text evidence="8">Belongs to the paired homeobox family. Bicoid subfamily.</text>
</comment>
<organism>
    <name type="scientific">Gallus gallus</name>
    <name type="common">Chicken</name>
    <dbReference type="NCBI Taxonomy" id="9031"/>
    <lineage>
        <taxon>Eukaryota</taxon>
        <taxon>Metazoa</taxon>
        <taxon>Chordata</taxon>
        <taxon>Craniata</taxon>
        <taxon>Vertebrata</taxon>
        <taxon>Euteleostomi</taxon>
        <taxon>Archelosauria</taxon>
        <taxon>Archosauria</taxon>
        <taxon>Dinosauria</taxon>
        <taxon>Saurischia</taxon>
        <taxon>Theropoda</taxon>
        <taxon>Coelurosauria</taxon>
        <taxon>Aves</taxon>
        <taxon>Neognathae</taxon>
        <taxon>Galloanserae</taxon>
        <taxon>Galliformes</taxon>
        <taxon>Phasianidae</taxon>
        <taxon>Phasianinae</taxon>
        <taxon>Gallus</taxon>
    </lineage>
</organism>